<comment type="function">
    <text evidence="1">Endonuclease that catalyzes the cleavage of RNA on the 3' side of pyrimidine nucleotides. Acts on single-stranded and double-stranded RNA (By similarity).</text>
</comment>
<comment type="catalytic activity">
    <reaction>
        <text>an [RNA] containing cytidine + H2O = an [RNA]-3'-cytidine-3'-phosphate + a 5'-hydroxy-ribonucleotide-3'-[RNA].</text>
        <dbReference type="EC" id="4.6.1.18"/>
    </reaction>
</comment>
<comment type="catalytic activity">
    <reaction>
        <text>an [RNA] containing uridine + H2O = an [RNA]-3'-uridine-3'-phosphate + a 5'-hydroxy-ribonucleotide-3'-[RNA].</text>
        <dbReference type="EC" id="4.6.1.18"/>
    </reaction>
</comment>
<comment type="subunit">
    <text evidence="1">Monomer. Interacts with and forms tight 1:1 complexes with RNH1. Dimerization of two such complexes may occur. Interaction with RNH1 inhibits this protein (By similarity).</text>
</comment>
<comment type="subcellular location">
    <subcellularLocation>
        <location>Secreted</location>
    </subcellularLocation>
</comment>
<comment type="tissue specificity">
    <text>Pancreas.</text>
</comment>
<comment type="similarity">
    <text evidence="3">Belongs to the pancreatic ribonuclease family.</text>
</comment>
<evidence type="ECO:0000250" key="1"/>
<evidence type="ECO:0000269" key="2">
    <source>
    </source>
</evidence>
<evidence type="ECO:0000305" key="3"/>
<dbReference type="EC" id="4.6.1.18"/>
<dbReference type="PIR" id="A00829">
    <property type="entry name" value="NRHY"/>
</dbReference>
<dbReference type="SMR" id="P00682"/>
<dbReference type="STRING" id="10036.ENSMAUP00000017101"/>
<dbReference type="GlyCosmos" id="P00682">
    <property type="glycosylation" value="1 site, No reported glycans"/>
</dbReference>
<dbReference type="iPTMnet" id="P00682"/>
<dbReference type="eggNOG" id="ENOG502SQ4K">
    <property type="taxonomic scope" value="Eukaryota"/>
</dbReference>
<dbReference type="Proteomes" id="UP000189706">
    <property type="component" value="Unplaced"/>
</dbReference>
<dbReference type="GO" id="GO:0005576">
    <property type="term" value="C:extracellular region"/>
    <property type="evidence" value="ECO:0007669"/>
    <property type="project" value="UniProtKB-SubCell"/>
</dbReference>
<dbReference type="GO" id="GO:0016829">
    <property type="term" value="F:lyase activity"/>
    <property type="evidence" value="ECO:0007669"/>
    <property type="project" value="UniProtKB-KW"/>
</dbReference>
<dbReference type="GO" id="GO:0003676">
    <property type="term" value="F:nucleic acid binding"/>
    <property type="evidence" value="ECO:0007669"/>
    <property type="project" value="InterPro"/>
</dbReference>
<dbReference type="GO" id="GO:0004522">
    <property type="term" value="F:ribonuclease A activity"/>
    <property type="evidence" value="ECO:0007669"/>
    <property type="project" value="UniProtKB-EC"/>
</dbReference>
<dbReference type="GO" id="GO:0050830">
    <property type="term" value="P:defense response to Gram-positive bacterium"/>
    <property type="evidence" value="ECO:0007669"/>
    <property type="project" value="TreeGrafter"/>
</dbReference>
<dbReference type="CDD" id="cd06265">
    <property type="entry name" value="RNase_A_canonical"/>
    <property type="match status" value="1"/>
</dbReference>
<dbReference type="FunFam" id="3.10.130.10:FF:000001">
    <property type="entry name" value="Ribonuclease pancreatic"/>
    <property type="match status" value="1"/>
</dbReference>
<dbReference type="Gene3D" id="3.10.130.10">
    <property type="entry name" value="Ribonuclease A-like domain"/>
    <property type="match status" value="1"/>
</dbReference>
<dbReference type="InterPro" id="IPR001427">
    <property type="entry name" value="RNaseA"/>
</dbReference>
<dbReference type="InterPro" id="IPR036816">
    <property type="entry name" value="RNaseA-like_dom_sf"/>
</dbReference>
<dbReference type="InterPro" id="IPR023411">
    <property type="entry name" value="RNaseA_AS"/>
</dbReference>
<dbReference type="InterPro" id="IPR023412">
    <property type="entry name" value="RNaseA_domain"/>
</dbReference>
<dbReference type="PANTHER" id="PTHR11437">
    <property type="entry name" value="RIBONUCLEASE"/>
    <property type="match status" value="1"/>
</dbReference>
<dbReference type="PANTHER" id="PTHR11437:SF24">
    <property type="entry name" value="RIBONUCLEASE PANCREATIC"/>
    <property type="match status" value="1"/>
</dbReference>
<dbReference type="Pfam" id="PF00074">
    <property type="entry name" value="RnaseA"/>
    <property type="match status" value="1"/>
</dbReference>
<dbReference type="PRINTS" id="PR00794">
    <property type="entry name" value="RIBONUCLEASE"/>
</dbReference>
<dbReference type="SMART" id="SM00092">
    <property type="entry name" value="RNAse_Pc"/>
    <property type="match status" value="1"/>
</dbReference>
<dbReference type="SUPFAM" id="SSF54076">
    <property type="entry name" value="RNase A-like"/>
    <property type="match status" value="1"/>
</dbReference>
<dbReference type="PROSITE" id="PS00127">
    <property type="entry name" value="RNASE_PANCREATIC"/>
    <property type="match status" value="1"/>
</dbReference>
<protein>
    <recommendedName>
        <fullName>Ribonuclease pancreatic</fullName>
        <ecNumber>4.6.1.18</ecNumber>
    </recommendedName>
    <alternativeName>
        <fullName>RNase 1</fullName>
    </alternativeName>
    <alternativeName>
        <fullName>RNase A</fullName>
    </alternativeName>
</protein>
<accession>P00682</accession>
<name>RNAS1_MESAU</name>
<proteinExistence type="evidence at protein level"/>
<feature type="chain" id="PRO_0000057205" description="Ribonuclease pancreatic">
    <location>
        <begin position="1"/>
        <end position="124"/>
    </location>
</feature>
<feature type="active site" description="Proton acceptor" evidence="1">
    <location>
        <position position="12"/>
    </location>
</feature>
<feature type="active site" description="Proton donor" evidence="1">
    <location>
        <position position="119"/>
    </location>
</feature>
<feature type="binding site" evidence="1">
    <location>
        <position position="7"/>
    </location>
    <ligand>
        <name>substrate</name>
    </ligand>
</feature>
<feature type="binding site" evidence="1">
    <location>
        <position position="10"/>
    </location>
    <ligand>
        <name>substrate</name>
    </ligand>
</feature>
<feature type="binding site" evidence="1">
    <location>
        <begin position="41"/>
        <end position="45"/>
    </location>
    <ligand>
        <name>substrate</name>
    </ligand>
</feature>
<feature type="binding site" evidence="1">
    <location>
        <position position="66"/>
    </location>
    <ligand>
        <name>substrate</name>
    </ligand>
</feature>
<feature type="binding site" evidence="1">
    <location>
        <position position="85"/>
    </location>
    <ligand>
        <name>substrate</name>
    </ligand>
</feature>
<feature type="glycosylation site" description="N-linked (GlcNAc...) asparagine" evidence="2">
    <location>
        <position position="34"/>
    </location>
</feature>
<feature type="disulfide bond" evidence="1">
    <location>
        <begin position="26"/>
        <end position="84"/>
    </location>
</feature>
<feature type="disulfide bond" evidence="1">
    <location>
        <begin position="40"/>
        <end position="95"/>
    </location>
</feature>
<feature type="disulfide bond" evidence="1">
    <location>
        <begin position="58"/>
        <end position="110"/>
    </location>
</feature>
<feature type="disulfide bond" evidence="1">
    <location>
        <begin position="65"/>
        <end position="72"/>
    </location>
</feature>
<gene>
    <name type="primary">RNASE1</name>
    <name type="synonym">RNS1</name>
</gene>
<organism>
    <name type="scientific">Mesocricetus auratus</name>
    <name type="common">Golden hamster</name>
    <dbReference type="NCBI Taxonomy" id="10036"/>
    <lineage>
        <taxon>Eukaryota</taxon>
        <taxon>Metazoa</taxon>
        <taxon>Chordata</taxon>
        <taxon>Craniata</taxon>
        <taxon>Vertebrata</taxon>
        <taxon>Euteleostomi</taxon>
        <taxon>Mammalia</taxon>
        <taxon>Eutheria</taxon>
        <taxon>Euarchontoglires</taxon>
        <taxon>Glires</taxon>
        <taxon>Rodentia</taxon>
        <taxon>Myomorpha</taxon>
        <taxon>Muroidea</taxon>
        <taxon>Cricetidae</taxon>
        <taxon>Cricetinae</taxon>
        <taxon>Mesocricetus</taxon>
    </lineage>
</organism>
<keyword id="KW-0903">Direct protein sequencing</keyword>
<keyword id="KW-1015">Disulfide bond</keyword>
<keyword id="KW-0255">Endonuclease</keyword>
<keyword id="KW-0325">Glycoprotein</keyword>
<keyword id="KW-0378">Hydrolase</keyword>
<keyword id="KW-0456">Lyase</keyword>
<keyword id="KW-0540">Nuclease</keyword>
<keyword id="KW-1185">Reference proteome</keyword>
<keyword id="KW-0964">Secreted</keyword>
<reference key="1">
    <citation type="journal article" date="1979" name="Biochimie">
        <title>The amino acid sequence of hamster pancreatic ribonuclease.</title>
        <authorList>
            <person name="Jekel P.A."/>
            <person name="Sips H.J."/>
            <person name="Lenstra J.A."/>
            <person name="Beintema J.J."/>
        </authorList>
    </citation>
    <scope>PROTEIN SEQUENCE</scope>
    <scope>GLYCOSYLATION AT ASN-34</scope>
    <source>
        <tissue>Pancreas</tissue>
    </source>
</reference>
<sequence>KESAAMKFERQHMDSTVATSSSPTYCNQMMKRRNMTQGYCKPVNTFVHESLADVHAVCSQENVACKNGKSNCYKSHSALHITDCRLKGNAKYPNCDYQTSQLQKQIIVACEGNPFVPVHFDASV</sequence>